<dbReference type="EC" id="3.2.2.n1"/>
<dbReference type="EMBL" id="AC123974">
    <property type="protein sequence ID" value="AAO19380.1"/>
    <property type="molecule type" value="Genomic_DNA"/>
</dbReference>
<dbReference type="EMBL" id="DP000009">
    <property type="protein sequence ID" value="ABF98359.1"/>
    <property type="status" value="ALT_SEQ"/>
    <property type="molecule type" value="Genomic_DNA"/>
</dbReference>
<dbReference type="EMBL" id="AP008209">
    <property type="protein sequence ID" value="BAF12894.1"/>
    <property type="molecule type" value="Genomic_DNA"/>
</dbReference>
<dbReference type="EMBL" id="AP014959">
    <property type="status" value="NOT_ANNOTATED_CDS"/>
    <property type="molecule type" value="Genomic_DNA"/>
</dbReference>
<dbReference type="EMBL" id="CM000140">
    <property type="protein sequence ID" value="EEE59747.1"/>
    <property type="molecule type" value="Genomic_DNA"/>
</dbReference>
<dbReference type="RefSeq" id="XP_015629625.1">
    <property type="nucleotide sequence ID" value="XM_015774139.1"/>
</dbReference>
<dbReference type="SMR" id="Q851C7"/>
<dbReference type="FunCoup" id="Q851C7">
    <property type="interactions" value="10"/>
</dbReference>
<dbReference type="STRING" id="39947.Q851C7"/>
<dbReference type="PaxDb" id="39947-Q851C7"/>
<dbReference type="KEGG" id="dosa:Os03g0697200"/>
<dbReference type="InParanoid" id="Q851C7"/>
<dbReference type="OrthoDB" id="414463at2759"/>
<dbReference type="Proteomes" id="UP000000763">
    <property type="component" value="Chromosome 3"/>
</dbReference>
<dbReference type="Proteomes" id="UP000007752">
    <property type="component" value="Chromosome 3"/>
</dbReference>
<dbReference type="Proteomes" id="UP000059680">
    <property type="component" value="Chromosome 3"/>
</dbReference>
<dbReference type="GO" id="GO:0005829">
    <property type="term" value="C:cytosol"/>
    <property type="evidence" value="ECO:0000318"/>
    <property type="project" value="GO_Central"/>
</dbReference>
<dbReference type="GO" id="GO:0005634">
    <property type="term" value="C:nucleus"/>
    <property type="evidence" value="ECO:0000318"/>
    <property type="project" value="GO_Central"/>
</dbReference>
<dbReference type="GO" id="GO:0102682">
    <property type="term" value="F:cytokinin riboside 5'-monophosphate phosphoribohydrolase activity"/>
    <property type="evidence" value="ECO:0000318"/>
    <property type="project" value="GO_Central"/>
</dbReference>
<dbReference type="GO" id="GO:0009691">
    <property type="term" value="P:cytokinin biosynthetic process"/>
    <property type="evidence" value="ECO:0000318"/>
    <property type="project" value="GO_Central"/>
</dbReference>
<dbReference type="FunFam" id="3.40.50.450:FF:000024">
    <property type="entry name" value="Probable cytokinin riboside 5'-monophosphate phosphoribohydrolase LOG4"/>
    <property type="match status" value="1"/>
</dbReference>
<dbReference type="Gene3D" id="3.40.50.450">
    <property type="match status" value="1"/>
</dbReference>
<dbReference type="InterPro" id="IPR005269">
    <property type="entry name" value="LOG"/>
</dbReference>
<dbReference type="InterPro" id="IPR031100">
    <property type="entry name" value="LOG_fam"/>
</dbReference>
<dbReference type="NCBIfam" id="TIGR00730">
    <property type="entry name" value="Rossman fold protein, TIGR00730 family"/>
    <property type="match status" value="1"/>
</dbReference>
<dbReference type="PANTHER" id="PTHR31223:SF51">
    <property type="entry name" value="CYTOKININ RIBOSIDE 5'-MONOPHOSPHATE PHOSPHORIBOHYDROLASE LOG4-RELATED"/>
    <property type="match status" value="1"/>
</dbReference>
<dbReference type="PANTHER" id="PTHR31223">
    <property type="entry name" value="LOG FAMILY PROTEIN YJL055W"/>
    <property type="match status" value="1"/>
</dbReference>
<dbReference type="Pfam" id="PF03641">
    <property type="entry name" value="Lysine_decarbox"/>
    <property type="match status" value="1"/>
</dbReference>
<dbReference type="SUPFAM" id="SSF102405">
    <property type="entry name" value="MCP/YpsA-like"/>
    <property type="match status" value="1"/>
</dbReference>
<keyword id="KW-0203">Cytokinin biosynthesis</keyword>
<keyword id="KW-0378">Hydrolase</keyword>
<keyword id="KW-1185">Reference proteome</keyword>
<evidence type="ECO:0000250" key="1"/>
<evidence type="ECO:0000250" key="2">
    <source>
        <dbReference type="UniProtKB" id="B2HS63"/>
    </source>
</evidence>
<evidence type="ECO:0000305" key="3"/>
<name>LOGL4_ORYSJ</name>
<proteinExistence type="inferred from homology"/>
<reference key="1">
    <citation type="journal article" date="2005" name="Genome Res.">
        <title>Sequence, annotation, and analysis of synteny between rice chromosome 3 and diverged grass species.</title>
        <authorList>
            <consortium name="The rice chromosome 3 sequencing consortium"/>
            <person name="Buell C.R."/>
            <person name="Yuan Q."/>
            <person name="Ouyang S."/>
            <person name="Liu J."/>
            <person name="Zhu W."/>
            <person name="Wang A."/>
            <person name="Maiti R."/>
            <person name="Haas B."/>
            <person name="Wortman J."/>
            <person name="Pertea M."/>
            <person name="Jones K.M."/>
            <person name="Kim M."/>
            <person name="Overton L."/>
            <person name="Tsitrin T."/>
            <person name="Fadrosh D."/>
            <person name="Bera J."/>
            <person name="Weaver B."/>
            <person name="Jin S."/>
            <person name="Johri S."/>
            <person name="Reardon M."/>
            <person name="Webb K."/>
            <person name="Hill J."/>
            <person name="Moffat K."/>
            <person name="Tallon L."/>
            <person name="Van Aken S."/>
            <person name="Lewis M."/>
            <person name="Utterback T."/>
            <person name="Feldblyum T."/>
            <person name="Zismann V."/>
            <person name="Iobst S."/>
            <person name="Hsiao J."/>
            <person name="de Vazeille A.R."/>
            <person name="Salzberg S.L."/>
            <person name="White O."/>
            <person name="Fraser C.M."/>
            <person name="Yu Y."/>
            <person name="Kim H."/>
            <person name="Rambo T."/>
            <person name="Currie J."/>
            <person name="Collura K."/>
            <person name="Kernodle-Thompson S."/>
            <person name="Wei F."/>
            <person name="Kudrna K."/>
            <person name="Ammiraju J.S.S."/>
            <person name="Luo M."/>
            <person name="Goicoechea J.L."/>
            <person name="Wing R.A."/>
            <person name="Henry D."/>
            <person name="Oates R."/>
            <person name="Palmer M."/>
            <person name="Pries G."/>
            <person name="Saski C."/>
            <person name="Simmons J."/>
            <person name="Soderlund C."/>
            <person name="Nelson W."/>
            <person name="de la Bastide M."/>
            <person name="Spiegel L."/>
            <person name="Nascimento L."/>
            <person name="Huang E."/>
            <person name="Preston R."/>
            <person name="Zutavern T."/>
            <person name="Palmer L."/>
            <person name="O'Shaughnessy A."/>
            <person name="Dike S."/>
            <person name="McCombie W.R."/>
            <person name="Minx P."/>
            <person name="Cordum H."/>
            <person name="Wilson R."/>
            <person name="Jin W."/>
            <person name="Lee H.R."/>
            <person name="Jiang J."/>
            <person name="Jackson S."/>
        </authorList>
    </citation>
    <scope>NUCLEOTIDE SEQUENCE [LARGE SCALE GENOMIC DNA]</scope>
    <source>
        <strain>cv. Nipponbare</strain>
    </source>
</reference>
<reference key="2">
    <citation type="journal article" date="2005" name="Nature">
        <title>The map-based sequence of the rice genome.</title>
        <authorList>
            <consortium name="International rice genome sequencing project (IRGSP)"/>
        </authorList>
    </citation>
    <scope>NUCLEOTIDE SEQUENCE [LARGE SCALE GENOMIC DNA]</scope>
    <source>
        <strain>cv. Nipponbare</strain>
    </source>
</reference>
<reference key="3">
    <citation type="journal article" date="2008" name="Nucleic Acids Res.">
        <title>The rice annotation project database (RAP-DB): 2008 update.</title>
        <authorList>
            <consortium name="The rice annotation project (RAP)"/>
        </authorList>
    </citation>
    <scope>GENOME REANNOTATION</scope>
    <source>
        <strain>cv. Nipponbare</strain>
    </source>
</reference>
<reference key="4">
    <citation type="journal article" date="2013" name="Rice">
        <title>Improvement of the Oryza sativa Nipponbare reference genome using next generation sequence and optical map data.</title>
        <authorList>
            <person name="Kawahara Y."/>
            <person name="de la Bastide M."/>
            <person name="Hamilton J.P."/>
            <person name="Kanamori H."/>
            <person name="McCombie W.R."/>
            <person name="Ouyang S."/>
            <person name="Schwartz D.C."/>
            <person name="Tanaka T."/>
            <person name="Wu J."/>
            <person name="Zhou S."/>
            <person name="Childs K.L."/>
            <person name="Davidson R.M."/>
            <person name="Lin H."/>
            <person name="Quesada-Ocampo L."/>
            <person name="Vaillancourt B."/>
            <person name="Sakai H."/>
            <person name="Lee S.S."/>
            <person name="Kim J."/>
            <person name="Numa H."/>
            <person name="Itoh T."/>
            <person name="Buell C.R."/>
            <person name="Matsumoto T."/>
        </authorList>
    </citation>
    <scope>GENOME REANNOTATION</scope>
    <source>
        <strain>cv. Nipponbare</strain>
    </source>
</reference>
<reference key="5">
    <citation type="journal article" date="2005" name="PLoS Biol.">
        <title>The genomes of Oryza sativa: a history of duplications.</title>
        <authorList>
            <person name="Yu J."/>
            <person name="Wang J."/>
            <person name="Lin W."/>
            <person name="Li S."/>
            <person name="Li H."/>
            <person name="Zhou J."/>
            <person name="Ni P."/>
            <person name="Dong W."/>
            <person name="Hu S."/>
            <person name="Zeng C."/>
            <person name="Zhang J."/>
            <person name="Zhang Y."/>
            <person name="Li R."/>
            <person name="Xu Z."/>
            <person name="Li S."/>
            <person name="Li X."/>
            <person name="Zheng H."/>
            <person name="Cong L."/>
            <person name="Lin L."/>
            <person name="Yin J."/>
            <person name="Geng J."/>
            <person name="Li G."/>
            <person name="Shi J."/>
            <person name="Liu J."/>
            <person name="Lv H."/>
            <person name="Li J."/>
            <person name="Wang J."/>
            <person name="Deng Y."/>
            <person name="Ran L."/>
            <person name="Shi X."/>
            <person name="Wang X."/>
            <person name="Wu Q."/>
            <person name="Li C."/>
            <person name="Ren X."/>
            <person name="Wang J."/>
            <person name="Wang X."/>
            <person name="Li D."/>
            <person name="Liu D."/>
            <person name="Zhang X."/>
            <person name="Ji Z."/>
            <person name="Zhao W."/>
            <person name="Sun Y."/>
            <person name="Zhang Z."/>
            <person name="Bao J."/>
            <person name="Han Y."/>
            <person name="Dong L."/>
            <person name="Ji J."/>
            <person name="Chen P."/>
            <person name="Wu S."/>
            <person name="Liu J."/>
            <person name="Xiao Y."/>
            <person name="Bu D."/>
            <person name="Tan J."/>
            <person name="Yang L."/>
            <person name="Ye C."/>
            <person name="Zhang J."/>
            <person name="Xu J."/>
            <person name="Zhou Y."/>
            <person name="Yu Y."/>
            <person name="Zhang B."/>
            <person name="Zhuang S."/>
            <person name="Wei H."/>
            <person name="Liu B."/>
            <person name="Lei M."/>
            <person name="Yu H."/>
            <person name="Li Y."/>
            <person name="Xu H."/>
            <person name="Wei S."/>
            <person name="He X."/>
            <person name="Fang L."/>
            <person name="Zhang Z."/>
            <person name="Zhang Y."/>
            <person name="Huang X."/>
            <person name="Su Z."/>
            <person name="Tong W."/>
            <person name="Li J."/>
            <person name="Tong Z."/>
            <person name="Li S."/>
            <person name="Ye J."/>
            <person name="Wang L."/>
            <person name="Fang L."/>
            <person name="Lei T."/>
            <person name="Chen C.-S."/>
            <person name="Chen H.-C."/>
            <person name="Xu Z."/>
            <person name="Li H."/>
            <person name="Huang H."/>
            <person name="Zhang F."/>
            <person name="Xu H."/>
            <person name="Li N."/>
            <person name="Zhao C."/>
            <person name="Li S."/>
            <person name="Dong L."/>
            <person name="Huang Y."/>
            <person name="Li L."/>
            <person name="Xi Y."/>
            <person name="Qi Q."/>
            <person name="Li W."/>
            <person name="Zhang B."/>
            <person name="Hu W."/>
            <person name="Zhang Y."/>
            <person name="Tian X."/>
            <person name="Jiao Y."/>
            <person name="Liang X."/>
            <person name="Jin J."/>
            <person name="Gao L."/>
            <person name="Zheng W."/>
            <person name="Hao B."/>
            <person name="Liu S.-M."/>
            <person name="Wang W."/>
            <person name="Yuan L."/>
            <person name="Cao M."/>
            <person name="McDermott J."/>
            <person name="Samudrala R."/>
            <person name="Wang J."/>
            <person name="Wong G.K.-S."/>
            <person name="Yang H."/>
        </authorList>
    </citation>
    <scope>NUCLEOTIDE SEQUENCE [LARGE SCALE GENOMIC DNA]</scope>
    <source>
        <strain>cv. Nipponbare</strain>
    </source>
</reference>
<reference key="6">
    <citation type="journal article" date="2009" name="Plant Cell">
        <title>Functional analyses of LONELY GUY cytokinin-activating enzymes reveal the importance of the direct activation pathway in Arabidopsis.</title>
        <authorList>
            <person name="Kuroha T."/>
            <person name="Tokunaga H."/>
            <person name="Kojima M."/>
            <person name="Ueda N."/>
            <person name="Ishida T."/>
            <person name="Nagawa S."/>
            <person name="Fukuda H."/>
            <person name="Sugimoto K."/>
            <person name="Sakakibara H."/>
        </authorList>
    </citation>
    <scope>GENE FAMILY</scope>
    <scope>NOMENCLATURE</scope>
</reference>
<sequence length="230" mass="23991">MDANHDKVVESGSRGGRGPVRTICVFCGSRRGNRPSFSAAALDLGKQLVERELDLVYGGGSGGLMGLVSKTVHDGGRHVLGVIPSALLPEEVSGETLGEAKVVRDMHERKSEMAKHADAFIALPGGYGTIEELLEIIAWAQLGIHNKPVGLLNVDGYYNNLLSLFDKGVEEGFIDAAARNIFVLADNAGELLTKLTEAAAAAAAAVEGGDGDQVDGEATAAAAGLKRKRS</sequence>
<gene>
    <name type="primary">LOGL4</name>
    <name type="ordered locus">Os03g0697200</name>
    <name type="ordered locus">LOC_Os03g49050</name>
    <name type="ORF">OsJ_12214</name>
    <name type="ORF">OSJNBb0021P10.15</name>
</gene>
<organism>
    <name type="scientific">Oryza sativa subsp. japonica</name>
    <name type="common">Rice</name>
    <dbReference type="NCBI Taxonomy" id="39947"/>
    <lineage>
        <taxon>Eukaryota</taxon>
        <taxon>Viridiplantae</taxon>
        <taxon>Streptophyta</taxon>
        <taxon>Embryophyta</taxon>
        <taxon>Tracheophyta</taxon>
        <taxon>Spermatophyta</taxon>
        <taxon>Magnoliopsida</taxon>
        <taxon>Liliopsida</taxon>
        <taxon>Poales</taxon>
        <taxon>Poaceae</taxon>
        <taxon>BOP clade</taxon>
        <taxon>Oryzoideae</taxon>
        <taxon>Oryzeae</taxon>
        <taxon>Oryzinae</taxon>
        <taxon>Oryza</taxon>
        <taxon>Oryza sativa</taxon>
    </lineage>
</organism>
<comment type="function">
    <text evidence="1">Cytokinin-activating enzyme working in the direct activation pathway. Phosphoribohydrolase that converts inactive cytokinin nucleotides to the biologically active free-base forms (By similarity).</text>
</comment>
<comment type="catalytic activity">
    <reaction>
        <text>N(6)-(dimethylallyl)adenosine 5'-phosphate + H2O = N(6)-dimethylallyladenine + D-ribose 5-phosphate</text>
        <dbReference type="Rhea" id="RHEA:48560"/>
        <dbReference type="ChEBI" id="CHEBI:15377"/>
        <dbReference type="ChEBI" id="CHEBI:17660"/>
        <dbReference type="ChEBI" id="CHEBI:57526"/>
        <dbReference type="ChEBI" id="CHEBI:78346"/>
        <dbReference type="EC" id="3.2.2.n1"/>
    </reaction>
</comment>
<comment type="catalytic activity">
    <reaction>
        <text>9-ribosyl-trans-zeatin 5'-phosphate + H2O = trans-zeatin + D-ribose 5-phosphate</text>
        <dbReference type="Rhea" id="RHEA:48564"/>
        <dbReference type="ChEBI" id="CHEBI:15377"/>
        <dbReference type="ChEBI" id="CHEBI:16522"/>
        <dbReference type="ChEBI" id="CHEBI:78346"/>
        <dbReference type="ChEBI" id="CHEBI:87947"/>
        <dbReference type="EC" id="3.2.2.n1"/>
    </reaction>
</comment>
<comment type="similarity">
    <text evidence="3">Belongs to the LOG family.</text>
</comment>
<comment type="sequence caution" evidence="3">
    <conflict type="erroneous gene model prediction">
        <sequence resource="EMBL-CDS" id="ABF98359"/>
    </conflict>
</comment>
<feature type="chain" id="PRO_0000395056" description="Probable cytokinin riboside 5'-monophosphate phosphoribohydrolase LOG4">
    <location>
        <begin position="1"/>
        <end position="230"/>
    </location>
</feature>
<feature type="binding site" evidence="2">
    <location>
        <position position="91"/>
    </location>
    <ligand>
        <name>substrate</name>
    </ligand>
</feature>
<feature type="binding site" evidence="2">
    <location>
        <begin position="109"/>
        <end position="110"/>
    </location>
    <ligand>
        <name>substrate</name>
    </ligand>
</feature>
<feature type="binding site" evidence="2">
    <location>
        <begin position="126"/>
        <end position="132"/>
    </location>
    <ligand>
        <name>substrate</name>
    </ligand>
</feature>
<accession>Q851C7</accession>
<accession>Q10EN9</accession>
<protein>
    <recommendedName>
        <fullName>Probable cytokinin riboside 5'-monophosphate phosphoribohydrolase LOG4</fullName>
        <ecNumber>3.2.2.n1</ecNumber>
    </recommendedName>
    <alternativeName>
        <fullName>Protein LONELY GUY-like 4</fullName>
    </alternativeName>
</protein>